<dbReference type="EMBL" id="AE008384">
    <property type="protein sequence ID" value="AAM32162.1"/>
    <property type="molecule type" value="Genomic_DNA"/>
</dbReference>
<dbReference type="RefSeq" id="WP_011034384.1">
    <property type="nucleotide sequence ID" value="NC_003901.1"/>
</dbReference>
<dbReference type="SMR" id="Q8PU75"/>
<dbReference type="KEGG" id="mma:MM_2466"/>
<dbReference type="PATRIC" id="fig|192952.21.peg.2821"/>
<dbReference type="eggNOG" id="arCOG04314">
    <property type="taxonomic scope" value="Archaea"/>
</dbReference>
<dbReference type="HOGENOM" id="CLU_178987_2_1_2"/>
<dbReference type="Proteomes" id="UP000000595">
    <property type="component" value="Chromosome"/>
</dbReference>
<dbReference type="GO" id="GO:0022627">
    <property type="term" value="C:cytosolic small ribosomal subunit"/>
    <property type="evidence" value="ECO:0007669"/>
    <property type="project" value="TreeGrafter"/>
</dbReference>
<dbReference type="GO" id="GO:0003735">
    <property type="term" value="F:structural constituent of ribosome"/>
    <property type="evidence" value="ECO:0007669"/>
    <property type="project" value="InterPro"/>
</dbReference>
<dbReference type="GO" id="GO:0030490">
    <property type="term" value="P:maturation of SSU-rRNA"/>
    <property type="evidence" value="ECO:0007669"/>
    <property type="project" value="TreeGrafter"/>
</dbReference>
<dbReference type="GO" id="GO:0000028">
    <property type="term" value="P:ribosomal small subunit assembly"/>
    <property type="evidence" value="ECO:0007669"/>
    <property type="project" value="TreeGrafter"/>
</dbReference>
<dbReference type="GO" id="GO:0006412">
    <property type="term" value="P:translation"/>
    <property type="evidence" value="ECO:0007669"/>
    <property type="project" value="UniProtKB-UniRule"/>
</dbReference>
<dbReference type="CDD" id="cd04457">
    <property type="entry name" value="S1_S28E"/>
    <property type="match status" value="1"/>
</dbReference>
<dbReference type="FunFam" id="2.40.50.140:FF:000145">
    <property type="entry name" value="30S ribosomal protein S28e"/>
    <property type="match status" value="1"/>
</dbReference>
<dbReference type="Gene3D" id="2.40.50.140">
    <property type="entry name" value="Nucleic acid-binding proteins"/>
    <property type="match status" value="1"/>
</dbReference>
<dbReference type="HAMAP" id="MF_00292">
    <property type="entry name" value="Ribosomal_eS28"/>
    <property type="match status" value="1"/>
</dbReference>
<dbReference type="InterPro" id="IPR012340">
    <property type="entry name" value="NA-bd_OB-fold"/>
</dbReference>
<dbReference type="InterPro" id="IPR000289">
    <property type="entry name" value="Ribosomal_eS28"/>
</dbReference>
<dbReference type="NCBIfam" id="NF003080">
    <property type="entry name" value="PRK04007.1"/>
    <property type="match status" value="1"/>
</dbReference>
<dbReference type="PANTHER" id="PTHR10769">
    <property type="entry name" value="40S RIBOSOMAL PROTEIN S28"/>
    <property type="match status" value="1"/>
</dbReference>
<dbReference type="PANTHER" id="PTHR10769:SF3">
    <property type="entry name" value="SMALL RIBOSOMAL SUBUNIT PROTEIN ES28"/>
    <property type="match status" value="1"/>
</dbReference>
<dbReference type="Pfam" id="PF01200">
    <property type="entry name" value="Ribosomal_S28e"/>
    <property type="match status" value="1"/>
</dbReference>
<dbReference type="SUPFAM" id="SSF50249">
    <property type="entry name" value="Nucleic acid-binding proteins"/>
    <property type="match status" value="1"/>
</dbReference>
<protein>
    <recommendedName>
        <fullName evidence="1">Small ribosomal subunit protein eS28</fullName>
    </recommendedName>
    <alternativeName>
        <fullName evidence="2">30S ribosomal protein S28e</fullName>
    </alternativeName>
</protein>
<sequence length="73" mass="7888">MAEESTTGGFAAEVIDVIGNTGMHGEASQIQCRVLEGRDKGRVITRNCVGPVRIGDILMLLETSREAKKLTTR</sequence>
<feature type="chain" id="PRO_0000136850" description="Small ribosomal subunit protein eS28">
    <location>
        <begin position="1"/>
        <end position="73"/>
    </location>
</feature>
<reference key="1">
    <citation type="journal article" date="2002" name="J. Mol. Microbiol. Biotechnol.">
        <title>The genome of Methanosarcina mazei: evidence for lateral gene transfer between Bacteria and Archaea.</title>
        <authorList>
            <person name="Deppenmeier U."/>
            <person name="Johann A."/>
            <person name="Hartsch T."/>
            <person name="Merkl R."/>
            <person name="Schmitz R.A."/>
            <person name="Martinez-Arias R."/>
            <person name="Henne A."/>
            <person name="Wiezer A."/>
            <person name="Baeumer S."/>
            <person name="Jacobi C."/>
            <person name="Brueggemann H."/>
            <person name="Lienard T."/>
            <person name="Christmann A."/>
            <person name="Boemecke M."/>
            <person name="Steckel S."/>
            <person name="Bhattacharyya A."/>
            <person name="Lykidis A."/>
            <person name="Overbeek R."/>
            <person name="Klenk H.-P."/>
            <person name="Gunsalus R.P."/>
            <person name="Fritz H.-J."/>
            <person name="Gottschalk G."/>
        </authorList>
    </citation>
    <scope>NUCLEOTIDE SEQUENCE [LARGE SCALE GENOMIC DNA]</scope>
    <source>
        <strain>ATCC BAA-159 / DSM 3647 / Goe1 / Go1 / JCM 11833 / OCM 88</strain>
    </source>
</reference>
<evidence type="ECO:0000255" key="1">
    <source>
        <dbReference type="HAMAP-Rule" id="MF_00292"/>
    </source>
</evidence>
<evidence type="ECO:0000305" key="2"/>
<gene>
    <name evidence="1" type="primary">rps28e</name>
    <name type="ordered locus">MM_2466</name>
</gene>
<organism>
    <name type="scientific">Methanosarcina mazei (strain ATCC BAA-159 / DSM 3647 / Goe1 / Go1 / JCM 11833 / OCM 88)</name>
    <name type="common">Methanosarcina frisia</name>
    <dbReference type="NCBI Taxonomy" id="192952"/>
    <lineage>
        <taxon>Archaea</taxon>
        <taxon>Methanobacteriati</taxon>
        <taxon>Methanobacteriota</taxon>
        <taxon>Stenosarchaea group</taxon>
        <taxon>Methanomicrobia</taxon>
        <taxon>Methanosarcinales</taxon>
        <taxon>Methanosarcinaceae</taxon>
        <taxon>Methanosarcina</taxon>
    </lineage>
</organism>
<name>RS28_METMA</name>
<accession>Q8PU75</accession>
<proteinExistence type="inferred from homology"/>
<keyword id="KW-0687">Ribonucleoprotein</keyword>
<keyword id="KW-0689">Ribosomal protein</keyword>
<comment type="similarity">
    <text evidence="1">Belongs to the eukaryotic ribosomal protein eS28 family.</text>
</comment>